<dbReference type="EC" id="6.3.5.2"/>
<dbReference type="EMBL" id="M83691">
    <property type="protein sequence ID" value="AAA22497.1"/>
    <property type="molecule type" value="Genomic_DNA"/>
</dbReference>
<dbReference type="EMBL" id="U51115">
    <property type="protein sequence ID" value="AAB62311.1"/>
    <property type="molecule type" value="Genomic_DNA"/>
</dbReference>
<dbReference type="EMBL" id="AL009126">
    <property type="protein sequence ID" value="CAB12455.2"/>
    <property type="molecule type" value="Genomic_DNA"/>
</dbReference>
<dbReference type="PIR" id="C69638">
    <property type="entry name" value="C69638"/>
</dbReference>
<dbReference type="RefSeq" id="NP_388517.2">
    <property type="nucleotide sequence ID" value="NC_000964.3"/>
</dbReference>
<dbReference type="RefSeq" id="WP_003244399.1">
    <property type="nucleotide sequence ID" value="NZ_OZ025638.1"/>
</dbReference>
<dbReference type="SMR" id="P29727"/>
<dbReference type="FunCoup" id="P29727">
    <property type="interactions" value="841"/>
</dbReference>
<dbReference type="IntAct" id="P29727">
    <property type="interactions" value="2"/>
</dbReference>
<dbReference type="MINT" id="P29727"/>
<dbReference type="STRING" id="224308.BSU06360"/>
<dbReference type="MEROPS" id="C26.957"/>
<dbReference type="jPOST" id="P29727"/>
<dbReference type="PaxDb" id="224308-BSU06360"/>
<dbReference type="EnsemblBacteria" id="CAB12455">
    <property type="protein sequence ID" value="CAB12455"/>
    <property type="gene ID" value="BSU_06360"/>
</dbReference>
<dbReference type="GeneID" id="936028"/>
<dbReference type="KEGG" id="bsu:BSU06360"/>
<dbReference type="PATRIC" id="fig|224308.179.peg.691"/>
<dbReference type="eggNOG" id="COG0518">
    <property type="taxonomic scope" value="Bacteria"/>
</dbReference>
<dbReference type="eggNOG" id="COG0519">
    <property type="taxonomic scope" value="Bacteria"/>
</dbReference>
<dbReference type="InParanoid" id="P29727"/>
<dbReference type="OrthoDB" id="9802219at2"/>
<dbReference type="PhylomeDB" id="P29727"/>
<dbReference type="BioCyc" id="BSUB:BSU06360-MONOMER"/>
<dbReference type="UniPathway" id="UPA00189">
    <property type="reaction ID" value="UER00296"/>
</dbReference>
<dbReference type="Proteomes" id="UP000001570">
    <property type="component" value="Chromosome"/>
</dbReference>
<dbReference type="GO" id="GO:0005829">
    <property type="term" value="C:cytosol"/>
    <property type="evidence" value="ECO:0000318"/>
    <property type="project" value="GO_Central"/>
</dbReference>
<dbReference type="GO" id="GO:0005524">
    <property type="term" value="F:ATP binding"/>
    <property type="evidence" value="ECO:0007669"/>
    <property type="project" value="UniProtKB-UniRule"/>
</dbReference>
<dbReference type="GO" id="GO:0003921">
    <property type="term" value="F:GMP synthase activity"/>
    <property type="evidence" value="ECO:0000318"/>
    <property type="project" value="GO_Central"/>
</dbReference>
<dbReference type="GO" id="GO:0006177">
    <property type="term" value="P:GMP biosynthetic process"/>
    <property type="evidence" value="ECO:0000318"/>
    <property type="project" value="GO_Central"/>
</dbReference>
<dbReference type="CDD" id="cd01742">
    <property type="entry name" value="GATase1_GMP_Synthase"/>
    <property type="match status" value="1"/>
</dbReference>
<dbReference type="CDD" id="cd01997">
    <property type="entry name" value="GMP_synthase_C"/>
    <property type="match status" value="1"/>
</dbReference>
<dbReference type="FunFam" id="3.30.300.10:FF:000002">
    <property type="entry name" value="GMP synthase [glutamine-hydrolyzing]"/>
    <property type="match status" value="1"/>
</dbReference>
<dbReference type="FunFam" id="3.40.50.620:FF:000001">
    <property type="entry name" value="GMP synthase [glutamine-hydrolyzing]"/>
    <property type="match status" value="1"/>
</dbReference>
<dbReference type="FunFam" id="3.40.50.880:FF:000001">
    <property type="entry name" value="GMP synthase [glutamine-hydrolyzing]"/>
    <property type="match status" value="1"/>
</dbReference>
<dbReference type="Gene3D" id="3.30.300.10">
    <property type="match status" value="1"/>
</dbReference>
<dbReference type="Gene3D" id="3.40.50.880">
    <property type="match status" value="1"/>
</dbReference>
<dbReference type="Gene3D" id="3.40.50.620">
    <property type="entry name" value="HUPs"/>
    <property type="match status" value="1"/>
</dbReference>
<dbReference type="HAMAP" id="MF_00344">
    <property type="entry name" value="GMP_synthase"/>
    <property type="match status" value="1"/>
</dbReference>
<dbReference type="InterPro" id="IPR029062">
    <property type="entry name" value="Class_I_gatase-like"/>
</dbReference>
<dbReference type="InterPro" id="IPR017926">
    <property type="entry name" value="GATASE"/>
</dbReference>
<dbReference type="InterPro" id="IPR001674">
    <property type="entry name" value="GMP_synth_C"/>
</dbReference>
<dbReference type="InterPro" id="IPR004739">
    <property type="entry name" value="GMP_synth_GATase"/>
</dbReference>
<dbReference type="InterPro" id="IPR022955">
    <property type="entry name" value="GMP_synthase"/>
</dbReference>
<dbReference type="InterPro" id="IPR025777">
    <property type="entry name" value="GMPS_ATP_PPase_dom"/>
</dbReference>
<dbReference type="InterPro" id="IPR022310">
    <property type="entry name" value="NAD/GMP_synthase"/>
</dbReference>
<dbReference type="InterPro" id="IPR014729">
    <property type="entry name" value="Rossmann-like_a/b/a_fold"/>
</dbReference>
<dbReference type="NCBIfam" id="TIGR00884">
    <property type="entry name" value="guaA_Cterm"/>
    <property type="match status" value="1"/>
</dbReference>
<dbReference type="NCBIfam" id="TIGR00888">
    <property type="entry name" value="guaA_Nterm"/>
    <property type="match status" value="1"/>
</dbReference>
<dbReference type="NCBIfam" id="NF000848">
    <property type="entry name" value="PRK00074.1"/>
    <property type="match status" value="1"/>
</dbReference>
<dbReference type="PANTHER" id="PTHR11922:SF2">
    <property type="entry name" value="GMP SYNTHASE [GLUTAMINE-HYDROLYZING]"/>
    <property type="match status" value="1"/>
</dbReference>
<dbReference type="PANTHER" id="PTHR11922">
    <property type="entry name" value="GMP SYNTHASE-RELATED"/>
    <property type="match status" value="1"/>
</dbReference>
<dbReference type="Pfam" id="PF00117">
    <property type="entry name" value="GATase"/>
    <property type="match status" value="1"/>
</dbReference>
<dbReference type="Pfam" id="PF00958">
    <property type="entry name" value="GMP_synt_C"/>
    <property type="match status" value="1"/>
</dbReference>
<dbReference type="Pfam" id="PF02540">
    <property type="entry name" value="NAD_synthase"/>
    <property type="match status" value="1"/>
</dbReference>
<dbReference type="PRINTS" id="PR00097">
    <property type="entry name" value="ANTSNTHASEII"/>
</dbReference>
<dbReference type="PRINTS" id="PR00099">
    <property type="entry name" value="CPSGATASE"/>
</dbReference>
<dbReference type="PRINTS" id="PR00096">
    <property type="entry name" value="GATASE"/>
</dbReference>
<dbReference type="SUPFAM" id="SSF52402">
    <property type="entry name" value="Adenine nucleotide alpha hydrolases-like"/>
    <property type="match status" value="1"/>
</dbReference>
<dbReference type="SUPFAM" id="SSF52317">
    <property type="entry name" value="Class I glutamine amidotransferase-like"/>
    <property type="match status" value="1"/>
</dbReference>
<dbReference type="SUPFAM" id="SSF54810">
    <property type="entry name" value="GMP synthetase C-terminal dimerisation domain"/>
    <property type="match status" value="1"/>
</dbReference>
<dbReference type="PROSITE" id="PS51273">
    <property type="entry name" value="GATASE_TYPE_1"/>
    <property type="match status" value="1"/>
</dbReference>
<dbReference type="PROSITE" id="PS51553">
    <property type="entry name" value="GMPS_ATP_PPASE"/>
    <property type="match status" value="1"/>
</dbReference>
<reference key="1">
    <citation type="journal article" date="1992" name="J. Bacteriol.">
        <title>Cloning and sequence of Bacillus subtilis purA and guaA, involved in the conversion of IMP to AMP and GMP.</title>
        <authorList>
            <person name="Maentsaelae P."/>
            <person name="Zalkin H."/>
        </authorList>
    </citation>
    <scope>NUCLEOTIDE SEQUENCE [GENOMIC DNA]</scope>
    <source>
        <strain>168 / DE1</strain>
    </source>
</reference>
<reference key="2">
    <citation type="journal article" date="1996" name="Microbiology">
        <title>The 52 degrees-55 degrees segment of the Bacillus subtilis chromosome: a region devoted to purine uptake and metabolism, and containing the genes cotA, gabP and guaA and the pur gene cluster within a 34960 bp nucleotide sequence.</title>
        <authorList>
            <person name="Borriss R."/>
            <person name="Porwollik S."/>
            <person name="Schroeter R."/>
        </authorList>
    </citation>
    <scope>NUCLEOTIDE SEQUENCE [GENOMIC DNA]</scope>
    <source>
        <strain>168</strain>
    </source>
</reference>
<reference key="3">
    <citation type="journal article" date="1997" name="Nature">
        <title>The complete genome sequence of the Gram-positive bacterium Bacillus subtilis.</title>
        <authorList>
            <person name="Kunst F."/>
            <person name="Ogasawara N."/>
            <person name="Moszer I."/>
            <person name="Albertini A.M."/>
            <person name="Alloni G."/>
            <person name="Azevedo V."/>
            <person name="Bertero M.G."/>
            <person name="Bessieres P."/>
            <person name="Bolotin A."/>
            <person name="Borchert S."/>
            <person name="Borriss R."/>
            <person name="Boursier L."/>
            <person name="Brans A."/>
            <person name="Braun M."/>
            <person name="Brignell S.C."/>
            <person name="Bron S."/>
            <person name="Brouillet S."/>
            <person name="Bruschi C.V."/>
            <person name="Caldwell B."/>
            <person name="Capuano V."/>
            <person name="Carter N.M."/>
            <person name="Choi S.-K."/>
            <person name="Codani J.-J."/>
            <person name="Connerton I.F."/>
            <person name="Cummings N.J."/>
            <person name="Daniel R.A."/>
            <person name="Denizot F."/>
            <person name="Devine K.M."/>
            <person name="Duesterhoeft A."/>
            <person name="Ehrlich S.D."/>
            <person name="Emmerson P.T."/>
            <person name="Entian K.-D."/>
            <person name="Errington J."/>
            <person name="Fabret C."/>
            <person name="Ferrari E."/>
            <person name="Foulger D."/>
            <person name="Fritz C."/>
            <person name="Fujita M."/>
            <person name="Fujita Y."/>
            <person name="Fuma S."/>
            <person name="Galizzi A."/>
            <person name="Galleron N."/>
            <person name="Ghim S.-Y."/>
            <person name="Glaser P."/>
            <person name="Goffeau A."/>
            <person name="Golightly E.J."/>
            <person name="Grandi G."/>
            <person name="Guiseppi G."/>
            <person name="Guy B.J."/>
            <person name="Haga K."/>
            <person name="Haiech J."/>
            <person name="Harwood C.R."/>
            <person name="Henaut A."/>
            <person name="Hilbert H."/>
            <person name="Holsappel S."/>
            <person name="Hosono S."/>
            <person name="Hullo M.-F."/>
            <person name="Itaya M."/>
            <person name="Jones L.-M."/>
            <person name="Joris B."/>
            <person name="Karamata D."/>
            <person name="Kasahara Y."/>
            <person name="Klaerr-Blanchard M."/>
            <person name="Klein C."/>
            <person name="Kobayashi Y."/>
            <person name="Koetter P."/>
            <person name="Koningstein G."/>
            <person name="Krogh S."/>
            <person name="Kumano M."/>
            <person name="Kurita K."/>
            <person name="Lapidus A."/>
            <person name="Lardinois S."/>
            <person name="Lauber J."/>
            <person name="Lazarevic V."/>
            <person name="Lee S.-M."/>
            <person name="Levine A."/>
            <person name="Liu H."/>
            <person name="Masuda S."/>
            <person name="Mauel C."/>
            <person name="Medigue C."/>
            <person name="Medina N."/>
            <person name="Mellado R.P."/>
            <person name="Mizuno M."/>
            <person name="Moestl D."/>
            <person name="Nakai S."/>
            <person name="Noback M."/>
            <person name="Noone D."/>
            <person name="O'Reilly M."/>
            <person name="Ogawa K."/>
            <person name="Ogiwara A."/>
            <person name="Oudega B."/>
            <person name="Park S.-H."/>
            <person name="Parro V."/>
            <person name="Pohl T.M."/>
            <person name="Portetelle D."/>
            <person name="Porwollik S."/>
            <person name="Prescott A.M."/>
            <person name="Presecan E."/>
            <person name="Pujic P."/>
            <person name="Purnelle B."/>
            <person name="Rapoport G."/>
            <person name="Rey M."/>
            <person name="Reynolds S."/>
            <person name="Rieger M."/>
            <person name="Rivolta C."/>
            <person name="Rocha E."/>
            <person name="Roche B."/>
            <person name="Rose M."/>
            <person name="Sadaie Y."/>
            <person name="Sato T."/>
            <person name="Scanlan E."/>
            <person name="Schleich S."/>
            <person name="Schroeter R."/>
            <person name="Scoffone F."/>
            <person name="Sekiguchi J."/>
            <person name="Sekowska A."/>
            <person name="Seror S.J."/>
            <person name="Serror P."/>
            <person name="Shin B.-S."/>
            <person name="Soldo B."/>
            <person name="Sorokin A."/>
            <person name="Tacconi E."/>
            <person name="Takagi T."/>
            <person name="Takahashi H."/>
            <person name="Takemaru K."/>
            <person name="Takeuchi M."/>
            <person name="Tamakoshi A."/>
            <person name="Tanaka T."/>
            <person name="Terpstra P."/>
            <person name="Tognoni A."/>
            <person name="Tosato V."/>
            <person name="Uchiyama S."/>
            <person name="Vandenbol M."/>
            <person name="Vannier F."/>
            <person name="Vassarotti A."/>
            <person name="Viari A."/>
            <person name="Wambutt R."/>
            <person name="Wedler E."/>
            <person name="Wedler H."/>
            <person name="Weitzenegger T."/>
            <person name="Winters P."/>
            <person name="Wipat A."/>
            <person name="Yamamoto H."/>
            <person name="Yamane K."/>
            <person name="Yasumoto K."/>
            <person name="Yata K."/>
            <person name="Yoshida K."/>
            <person name="Yoshikawa H.-F."/>
            <person name="Zumstein E."/>
            <person name="Yoshikawa H."/>
            <person name="Danchin A."/>
        </authorList>
    </citation>
    <scope>NUCLEOTIDE SEQUENCE [LARGE SCALE GENOMIC DNA]</scope>
    <source>
        <strain>168</strain>
    </source>
</reference>
<reference key="4">
    <citation type="journal article" date="2009" name="Microbiology">
        <title>From a consortium sequence to a unified sequence: the Bacillus subtilis 168 reference genome a decade later.</title>
        <authorList>
            <person name="Barbe V."/>
            <person name="Cruveiller S."/>
            <person name="Kunst F."/>
            <person name="Lenoble P."/>
            <person name="Meurice G."/>
            <person name="Sekowska A."/>
            <person name="Vallenet D."/>
            <person name="Wang T."/>
            <person name="Moszer I."/>
            <person name="Medigue C."/>
            <person name="Danchin A."/>
        </authorList>
    </citation>
    <scope>SEQUENCE REVISION TO 149 AND 459-463</scope>
</reference>
<comment type="function">
    <text evidence="1">Catalyzes the synthesis of GMP from XMP.</text>
</comment>
<comment type="catalytic activity">
    <reaction>
        <text>XMP + L-glutamine + ATP + H2O = GMP + L-glutamate + AMP + diphosphate + 2 H(+)</text>
        <dbReference type="Rhea" id="RHEA:11680"/>
        <dbReference type="ChEBI" id="CHEBI:15377"/>
        <dbReference type="ChEBI" id="CHEBI:15378"/>
        <dbReference type="ChEBI" id="CHEBI:29985"/>
        <dbReference type="ChEBI" id="CHEBI:30616"/>
        <dbReference type="ChEBI" id="CHEBI:33019"/>
        <dbReference type="ChEBI" id="CHEBI:57464"/>
        <dbReference type="ChEBI" id="CHEBI:58115"/>
        <dbReference type="ChEBI" id="CHEBI:58359"/>
        <dbReference type="ChEBI" id="CHEBI:456215"/>
        <dbReference type="EC" id="6.3.5.2"/>
    </reaction>
</comment>
<comment type="pathway">
    <text>Purine metabolism; GMP biosynthesis; GMP from XMP (L-Gln route): step 1/1.</text>
</comment>
<comment type="subunit">
    <text evidence="1">Homodimer.</text>
</comment>
<accession>P29727</accession>
<accession>O34531</accession>
<proteinExistence type="inferred from homology"/>
<gene>
    <name type="primary">guaA</name>
    <name type="ordered locus">BSU06360</name>
</gene>
<evidence type="ECO:0000250" key="1"/>
<evidence type="ECO:0000305" key="2"/>
<name>GUAA_BACSU</name>
<protein>
    <recommendedName>
        <fullName>GMP synthase [glutamine-hydrolyzing]</fullName>
        <ecNumber>6.3.5.2</ecNumber>
    </recommendedName>
    <alternativeName>
        <fullName>GMP synthetase</fullName>
    </alternativeName>
    <alternativeName>
        <fullName>Glutamine amidotransferase</fullName>
    </alternativeName>
</protein>
<feature type="chain" id="PRO_0000140093" description="GMP synthase [glutamine-hydrolyzing]">
    <location>
        <begin position="1"/>
        <end position="513"/>
    </location>
</feature>
<feature type="domain" description="Glutamine amidotransferase type-1">
    <location>
        <begin position="8"/>
        <end position="198"/>
    </location>
</feature>
<feature type="domain" description="GMPS ATP-PPase">
    <location>
        <begin position="199"/>
        <end position="388"/>
    </location>
</feature>
<feature type="active site" description="Nucleophile" evidence="1">
    <location>
        <position position="85"/>
    </location>
</feature>
<feature type="active site" evidence="1">
    <location>
        <position position="172"/>
    </location>
</feature>
<feature type="active site" evidence="1">
    <location>
        <position position="174"/>
    </location>
</feature>
<feature type="binding site" evidence="1">
    <location>
        <begin position="227"/>
        <end position="233"/>
    </location>
    <ligand>
        <name>ATP</name>
        <dbReference type="ChEBI" id="CHEBI:30616"/>
    </ligand>
</feature>
<feature type="sequence conflict" description="In Ref. 1; AAA22497." evidence="2" ref="1">
    <original>S</original>
    <variation>T</variation>
    <location>
        <position position="103"/>
    </location>
</feature>
<feature type="sequence conflict" description="In Ref. 1; AAA22497 and 2; AAB62311." evidence="2" ref="1 2">
    <original>A</original>
    <variation>AA</variation>
    <location>
        <position position="149"/>
    </location>
</feature>
<feature type="sequence conflict" description="In Ref. 1; AAA22497." evidence="2" ref="1">
    <original>A</original>
    <variation>G</variation>
    <location>
        <position position="162"/>
    </location>
</feature>
<feature type="sequence conflict" description="In Ref. 1; AAA22497." evidence="2" ref="1">
    <original>Y</original>
    <variation>H</variation>
    <location>
        <position position="167"/>
    </location>
</feature>
<feature type="sequence conflict" description="In Ref. 1; AAA22497." evidence="2" ref="1">
    <original>C</original>
    <variation>S</variation>
    <location>
        <position position="195"/>
    </location>
</feature>
<feature type="sequence conflict" description="In Ref. 1; AAA22497." evidence="2" ref="1">
    <original>T</original>
    <variation>Q</variation>
    <location>
        <position position="215"/>
    </location>
</feature>
<feature type="sequence conflict" description="In Ref. 1; AAA22497." evidence="2" ref="1">
    <original>A</original>
    <variation>G</variation>
    <location>
        <position position="224"/>
    </location>
</feature>
<feature type="sequence conflict" description="In Ref. 1; AAA22497." evidence="2" ref="1">
    <original>A</original>
    <variation>R</variation>
    <location>
        <position position="261"/>
    </location>
</feature>
<feature type="sequence conflict" description="In Ref. 1; AAA22497 and 2; AAB62311." evidence="2" ref="1 2">
    <original>GIRAV</original>
    <variation>ESRR</variation>
    <location>
        <begin position="459"/>
        <end position="463"/>
    </location>
</feature>
<keyword id="KW-0067">ATP-binding</keyword>
<keyword id="KW-0315">Glutamine amidotransferase</keyword>
<keyword id="KW-0332">GMP biosynthesis</keyword>
<keyword id="KW-0436">Ligase</keyword>
<keyword id="KW-0547">Nucleotide-binding</keyword>
<keyword id="KW-0658">Purine biosynthesis</keyword>
<keyword id="KW-1185">Reference proteome</keyword>
<organism>
    <name type="scientific">Bacillus subtilis (strain 168)</name>
    <dbReference type="NCBI Taxonomy" id="224308"/>
    <lineage>
        <taxon>Bacteria</taxon>
        <taxon>Bacillati</taxon>
        <taxon>Bacillota</taxon>
        <taxon>Bacilli</taxon>
        <taxon>Bacillales</taxon>
        <taxon>Bacillaceae</taxon>
        <taxon>Bacillus</taxon>
    </lineage>
</organism>
<sequence length="513" mass="57849">MTKLVNEMILVLDFGSQYNQLITRRIREFGVYSELHPHTLTAEEIKKMNPKGIILSGGPNSVYDENSFRCDEKIFELDIPVLGICYGMQLMTHYLGGKVEAASQREYGKANIRIEGTPDLFRDLPNEQVVWMSHGDLVVEVPEGFTVDATSHHCPNSAMSKADKKWYGVQFHPEVRHSEYGNDLLKNFVFGVCECEGEWSMENFIEIEMQKIRETVGDKQVLCALSGGVDSSVVAVLIHKAIGDQLTCIFVDHGLLRKGEAEGVMKTFSEGFNMNVIKVDAKDRFLNKLKGVSDPEQKRKIIGNEFIYVFDDEADKLKGIDYLAQGTLYTDIIESGTATAQTIKSHHNVGGLPEDMQFELIEPLNTLFKDEVRALGTELGIPDEIVWRQPFPGPGLGIRVLGEVTEEKLEIVRESDAILREEIANHGLERDIWQYFTVLPDIRSVGVMGDARTYDYTIGIRAVTSIDGMTSDWARIPWDVLEVISTRIVNEVKHINRVVYDITSKPPATIEWE</sequence>